<protein>
    <recommendedName>
        <fullName>Uncharacterized protein TP_0929</fullName>
    </recommendedName>
</protein>
<feature type="chain" id="PRO_0000202355" description="Uncharacterized protein TP_0929">
    <location>
        <begin position="1"/>
        <end position="256"/>
    </location>
</feature>
<accession>O83899</accession>
<organism>
    <name type="scientific">Treponema pallidum (strain Nichols)</name>
    <dbReference type="NCBI Taxonomy" id="243276"/>
    <lineage>
        <taxon>Bacteria</taxon>
        <taxon>Pseudomonadati</taxon>
        <taxon>Spirochaetota</taxon>
        <taxon>Spirochaetia</taxon>
        <taxon>Spirochaetales</taxon>
        <taxon>Treponemataceae</taxon>
        <taxon>Treponema</taxon>
    </lineage>
</organism>
<dbReference type="EMBL" id="AE000520">
    <property type="protein sequence ID" value="AAC65888.1"/>
    <property type="molecule type" value="Genomic_DNA"/>
</dbReference>
<dbReference type="PIR" id="B71264">
    <property type="entry name" value="B71264"/>
</dbReference>
<dbReference type="RefSeq" id="WP_010882372.1">
    <property type="nucleotide sequence ID" value="NC_021490.2"/>
</dbReference>
<dbReference type="IntAct" id="O83899">
    <property type="interactions" value="20"/>
</dbReference>
<dbReference type="STRING" id="243276.TP_0929"/>
<dbReference type="EnsemblBacteria" id="AAC65888">
    <property type="protein sequence ID" value="AAC65888"/>
    <property type="gene ID" value="TP_0929"/>
</dbReference>
<dbReference type="KEGG" id="tpa:TP_0929"/>
<dbReference type="eggNOG" id="COG0760">
    <property type="taxonomic scope" value="Bacteria"/>
</dbReference>
<dbReference type="HOGENOM" id="CLU_1085619_0_0_12"/>
<dbReference type="OrthoDB" id="362685at2"/>
<dbReference type="Proteomes" id="UP000000811">
    <property type="component" value="Chromosome"/>
</dbReference>
<name>Y929_TREPA</name>
<keyword id="KW-1185">Reference proteome</keyword>
<sequence length="256" mass="28193">MSFEDAVATGSTKVGTDATGKMTHSYRSDVNEFFPDAQDLDTVLRTAVGALSPVVKIERGFAIVRTDAEPSAPDFSDAATRERVFAHMARVERGTIERFLEEEAHTFSTRAKQGGFTAAAQSLNLDVHTSRSFPINFGNVDVLPALPRQSDPPLARIAYDEKFFSTAFALLPGQVSDPLILDSSVVLLQLHEEKSVDESVLATTGDSYAHHVRTWYPGYPLALLNTAKMPWAQESVVDTILAHPSFKDTFDNIFRR</sequence>
<reference key="1">
    <citation type="journal article" date="1998" name="Science">
        <title>Complete genome sequence of Treponema pallidum, the syphilis spirochete.</title>
        <authorList>
            <person name="Fraser C.M."/>
            <person name="Norris S.J."/>
            <person name="Weinstock G.M."/>
            <person name="White O."/>
            <person name="Sutton G.G."/>
            <person name="Dodson R.J."/>
            <person name="Gwinn M.L."/>
            <person name="Hickey E.K."/>
            <person name="Clayton R.A."/>
            <person name="Ketchum K.A."/>
            <person name="Sodergren E."/>
            <person name="Hardham J.M."/>
            <person name="McLeod M.P."/>
            <person name="Salzberg S.L."/>
            <person name="Peterson J.D."/>
            <person name="Khalak H.G."/>
            <person name="Richardson D.L."/>
            <person name="Howell J.K."/>
            <person name="Chidambaram M."/>
            <person name="Utterback T.R."/>
            <person name="McDonald L.A."/>
            <person name="Artiach P."/>
            <person name="Bowman C."/>
            <person name="Cotton M.D."/>
            <person name="Fujii C."/>
            <person name="Garland S.A."/>
            <person name="Hatch B."/>
            <person name="Horst K."/>
            <person name="Roberts K.M."/>
            <person name="Sandusky M."/>
            <person name="Weidman J.F."/>
            <person name="Smith H.O."/>
            <person name="Venter J.C."/>
        </authorList>
    </citation>
    <scope>NUCLEOTIDE SEQUENCE [LARGE SCALE GENOMIC DNA]</scope>
    <source>
        <strain>Nichols</strain>
    </source>
</reference>
<proteinExistence type="predicted"/>
<gene>
    <name type="ordered locus">TP_0929</name>
</gene>